<comment type="function">
    <text evidence="1">Part of the ABC transporter complex PhnCDE involved in phosphonates import. Responsible for energy coupling to the transport system.</text>
</comment>
<comment type="catalytic activity">
    <reaction evidence="1">
        <text>phosphonate(out) + ATP + H2O = phosphonate(in) + ADP + phosphate + H(+)</text>
        <dbReference type="Rhea" id="RHEA:18065"/>
        <dbReference type="ChEBI" id="CHEBI:15377"/>
        <dbReference type="ChEBI" id="CHEBI:15378"/>
        <dbReference type="ChEBI" id="CHEBI:16215"/>
        <dbReference type="ChEBI" id="CHEBI:30616"/>
        <dbReference type="ChEBI" id="CHEBI:43474"/>
        <dbReference type="ChEBI" id="CHEBI:456216"/>
        <dbReference type="EC" id="7.3.2.2"/>
    </reaction>
</comment>
<comment type="subunit">
    <text evidence="1">The complex is composed of two ATP-binding proteins (PhnC), two transmembrane proteins (PhnE) and a solute-binding protein (PhnD).</text>
</comment>
<comment type="subcellular location">
    <subcellularLocation>
        <location evidence="1">Cell inner membrane</location>
        <topology evidence="1">Peripheral membrane protein</topology>
    </subcellularLocation>
</comment>
<comment type="similarity">
    <text evidence="1">Belongs to the ABC transporter superfamily. Phosphonates importer (TC 3.A.1.9.1) family.</text>
</comment>
<feature type="chain" id="PRO_0000274751" description="Phosphonates import ATP-binding protein PhnC">
    <location>
        <begin position="1"/>
        <end position="262"/>
    </location>
</feature>
<feature type="domain" description="ABC transporter" evidence="1">
    <location>
        <begin position="5"/>
        <end position="253"/>
    </location>
</feature>
<feature type="binding site" evidence="1">
    <location>
        <begin position="37"/>
        <end position="44"/>
    </location>
    <ligand>
        <name>ATP</name>
        <dbReference type="ChEBI" id="CHEBI:30616"/>
    </ligand>
</feature>
<sequence length="262" mass="29512">MQTIIRVEKLAKTFNQHQALHAVDLNIHHGEMVALLGPSGSGKSTLLRHLSGLIVGDKKPECRVELLGCTVQQNGRLARDIRKSRANTGYIFQQFNLVNRLSVLENVLIGALGSTPFWRTCFSWFTREQKQRALQALTRVGMVHFAHQRVSTLSGGQQQRVAIARALMQQAKVILADEPIASLDPESARIVMDTLRDINQNDGITVVVTLHQVDYALRYCERIVALRQGHVFYDGSSQLFDNDRFDHLYRSINRVEENAKAA</sequence>
<proteinExistence type="inferred from homology"/>
<gene>
    <name evidence="1" type="primary">phnC</name>
    <name type="ordered locus">SDY_4111</name>
</gene>
<evidence type="ECO:0000255" key="1">
    <source>
        <dbReference type="HAMAP-Rule" id="MF_01713"/>
    </source>
</evidence>
<organism>
    <name type="scientific">Shigella dysenteriae serotype 1 (strain Sd197)</name>
    <dbReference type="NCBI Taxonomy" id="300267"/>
    <lineage>
        <taxon>Bacteria</taxon>
        <taxon>Pseudomonadati</taxon>
        <taxon>Pseudomonadota</taxon>
        <taxon>Gammaproteobacteria</taxon>
        <taxon>Enterobacterales</taxon>
        <taxon>Enterobacteriaceae</taxon>
        <taxon>Shigella</taxon>
    </lineage>
</organism>
<dbReference type="EC" id="7.3.2.2" evidence="1"/>
<dbReference type="EMBL" id="CP000034">
    <property type="protein sequence ID" value="ABB64022.1"/>
    <property type="molecule type" value="Genomic_DNA"/>
</dbReference>
<dbReference type="RefSeq" id="WP_001193416.1">
    <property type="nucleotide sequence ID" value="NC_007606.1"/>
</dbReference>
<dbReference type="RefSeq" id="YP_405513.1">
    <property type="nucleotide sequence ID" value="NC_007606.1"/>
</dbReference>
<dbReference type="SMR" id="Q329I3"/>
<dbReference type="STRING" id="300267.SDY_4111"/>
<dbReference type="EnsemblBacteria" id="ABB64022">
    <property type="protein sequence ID" value="ABB64022"/>
    <property type="gene ID" value="SDY_4111"/>
</dbReference>
<dbReference type="KEGG" id="sdy:SDY_4111"/>
<dbReference type="PATRIC" id="fig|300267.13.peg.4835"/>
<dbReference type="HOGENOM" id="CLU_000604_1_22_6"/>
<dbReference type="Proteomes" id="UP000002716">
    <property type="component" value="Chromosome"/>
</dbReference>
<dbReference type="GO" id="GO:0005886">
    <property type="term" value="C:plasma membrane"/>
    <property type="evidence" value="ECO:0007669"/>
    <property type="project" value="UniProtKB-SubCell"/>
</dbReference>
<dbReference type="GO" id="GO:0015416">
    <property type="term" value="F:ABC-type phosphonate transporter activity"/>
    <property type="evidence" value="ECO:0007669"/>
    <property type="project" value="UniProtKB-EC"/>
</dbReference>
<dbReference type="GO" id="GO:0005524">
    <property type="term" value="F:ATP binding"/>
    <property type="evidence" value="ECO:0007669"/>
    <property type="project" value="UniProtKB-KW"/>
</dbReference>
<dbReference type="GO" id="GO:0016887">
    <property type="term" value="F:ATP hydrolysis activity"/>
    <property type="evidence" value="ECO:0007669"/>
    <property type="project" value="InterPro"/>
</dbReference>
<dbReference type="CDD" id="cd03256">
    <property type="entry name" value="ABC_PhnC_transporter"/>
    <property type="match status" value="1"/>
</dbReference>
<dbReference type="Gene3D" id="3.40.50.300">
    <property type="entry name" value="P-loop containing nucleotide triphosphate hydrolases"/>
    <property type="match status" value="1"/>
</dbReference>
<dbReference type="InterPro" id="IPR003593">
    <property type="entry name" value="AAA+_ATPase"/>
</dbReference>
<dbReference type="InterPro" id="IPR003439">
    <property type="entry name" value="ABC_transporter-like_ATP-bd"/>
</dbReference>
<dbReference type="InterPro" id="IPR017871">
    <property type="entry name" value="ABC_transporter-like_CS"/>
</dbReference>
<dbReference type="InterPro" id="IPR012693">
    <property type="entry name" value="ABC_transpr_PhnC"/>
</dbReference>
<dbReference type="InterPro" id="IPR050086">
    <property type="entry name" value="MetN_ABC_transporter-like"/>
</dbReference>
<dbReference type="InterPro" id="IPR027417">
    <property type="entry name" value="P-loop_NTPase"/>
</dbReference>
<dbReference type="NCBIfam" id="TIGR02315">
    <property type="entry name" value="ABC_phnC"/>
    <property type="match status" value="1"/>
</dbReference>
<dbReference type="NCBIfam" id="NF007438">
    <property type="entry name" value="PRK09984.1"/>
    <property type="match status" value="1"/>
</dbReference>
<dbReference type="PANTHER" id="PTHR43166">
    <property type="entry name" value="AMINO ACID IMPORT ATP-BINDING PROTEIN"/>
    <property type="match status" value="1"/>
</dbReference>
<dbReference type="PANTHER" id="PTHR43166:SF6">
    <property type="entry name" value="PHOSPHONATES IMPORT ATP-BINDING PROTEIN PHNC"/>
    <property type="match status" value="1"/>
</dbReference>
<dbReference type="Pfam" id="PF00005">
    <property type="entry name" value="ABC_tran"/>
    <property type="match status" value="1"/>
</dbReference>
<dbReference type="SMART" id="SM00382">
    <property type="entry name" value="AAA"/>
    <property type="match status" value="1"/>
</dbReference>
<dbReference type="SUPFAM" id="SSF52540">
    <property type="entry name" value="P-loop containing nucleoside triphosphate hydrolases"/>
    <property type="match status" value="1"/>
</dbReference>
<dbReference type="PROSITE" id="PS00211">
    <property type="entry name" value="ABC_TRANSPORTER_1"/>
    <property type="match status" value="1"/>
</dbReference>
<dbReference type="PROSITE" id="PS50893">
    <property type="entry name" value="ABC_TRANSPORTER_2"/>
    <property type="match status" value="1"/>
</dbReference>
<dbReference type="PROSITE" id="PS51249">
    <property type="entry name" value="PHNC"/>
    <property type="match status" value="1"/>
</dbReference>
<accession>Q329I3</accession>
<keyword id="KW-0067">ATP-binding</keyword>
<keyword id="KW-0997">Cell inner membrane</keyword>
<keyword id="KW-1003">Cell membrane</keyword>
<keyword id="KW-0472">Membrane</keyword>
<keyword id="KW-0547">Nucleotide-binding</keyword>
<keyword id="KW-0918">Phosphonate transport</keyword>
<keyword id="KW-1185">Reference proteome</keyword>
<keyword id="KW-1278">Translocase</keyword>
<keyword id="KW-0813">Transport</keyword>
<reference key="1">
    <citation type="journal article" date="2005" name="Nucleic Acids Res.">
        <title>Genome dynamics and diversity of Shigella species, the etiologic agents of bacillary dysentery.</title>
        <authorList>
            <person name="Yang F."/>
            <person name="Yang J."/>
            <person name="Zhang X."/>
            <person name="Chen L."/>
            <person name="Jiang Y."/>
            <person name="Yan Y."/>
            <person name="Tang X."/>
            <person name="Wang J."/>
            <person name="Xiong Z."/>
            <person name="Dong J."/>
            <person name="Xue Y."/>
            <person name="Zhu Y."/>
            <person name="Xu X."/>
            <person name="Sun L."/>
            <person name="Chen S."/>
            <person name="Nie H."/>
            <person name="Peng J."/>
            <person name="Xu J."/>
            <person name="Wang Y."/>
            <person name="Yuan Z."/>
            <person name="Wen Y."/>
            <person name="Yao Z."/>
            <person name="Shen Y."/>
            <person name="Qiang B."/>
            <person name="Hou Y."/>
            <person name="Yu J."/>
            <person name="Jin Q."/>
        </authorList>
    </citation>
    <scope>NUCLEOTIDE SEQUENCE [LARGE SCALE GENOMIC DNA]</scope>
    <source>
        <strain>Sd197</strain>
    </source>
</reference>
<name>PHNC_SHIDS</name>
<protein>
    <recommendedName>
        <fullName evidence="1">Phosphonates import ATP-binding protein PhnC</fullName>
        <ecNumber evidence="1">7.3.2.2</ecNumber>
    </recommendedName>
</protein>